<protein>
    <recommendedName>
        <fullName evidence="2">Acetyl esterase</fullName>
        <ecNumber evidence="2">3.1.1.-</ecNumber>
    </recommendedName>
</protein>
<reference key="1">
    <citation type="journal article" date="2001" name="Nature">
        <title>Complete genome sequence of a multiple drug resistant Salmonella enterica serovar Typhi CT18.</title>
        <authorList>
            <person name="Parkhill J."/>
            <person name="Dougan G."/>
            <person name="James K.D."/>
            <person name="Thomson N.R."/>
            <person name="Pickard D."/>
            <person name="Wain J."/>
            <person name="Churcher C.M."/>
            <person name="Mungall K.L."/>
            <person name="Bentley S.D."/>
            <person name="Holden M.T.G."/>
            <person name="Sebaihia M."/>
            <person name="Baker S."/>
            <person name="Basham D."/>
            <person name="Brooks K."/>
            <person name="Chillingworth T."/>
            <person name="Connerton P."/>
            <person name="Cronin A."/>
            <person name="Davis P."/>
            <person name="Davies R.M."/>
            <person name="Dowd L."/>
            <person name="White N."/>
            <person name="Farrar J."/>
            <person name="Feltwell T."/>
            <person name="Hamlin N."/>
            <person name="Haque A."/>
            <person name="Hien T.T."/>
            <person name="Holroyd S."/>
            <person name="Jagels K."/>
            <person name="Krogh A."/>
            <person name="Larsen T.S."/>
            <person name="Leather S."/>
            <person name="Moule S."/>
            <person name="O'Gaora P."/>
            <person name="Parry C."/>
            <person name="Quail M.A."/>
            <person name="Rutherford K.M."/>
            <person name="Simmonds M."/>
            <person name="Skelton J."/>
            <person name="Stevens K."/>
            <person name="Whitehead S."/>
            <person name="Barrell B.G."/>
        </authorList>
    </citation>
    <scope>NUCLEOTIDE SEQUENCE [LARGE SCALE GENOMIC DNA]</scope>
    <source>
        <strain>CT18</strain>
    </source>
</reference>
<reference key="2">
    <citation type="journal article" date="2003" name="J. Bacteriol.">
        <title>Comparative genomics of Salmonella enterica serovar Typhi strains Ty2 and CT18.</title>
        <authorList>
            <person name="Deng W."/>
            <person name="Liou S.-R."/>
            <person name="Plunkett G. III"/>
            <person name="Mayhew G.F."/>
            <person name="Rose D.J."/>
            <person name="Burland V."/>
            <person name="Kodoyianni V."/>
            <person name="Schwartz D.C."/>
            <person name="Blattner F.R."/>
        </authorList>
    </citation>
    <scope>NUCLEOTIDE SEQUENCE [LARGE SCALE GENOMIC DNA]</scope>
    <source>
        <strain>ATCC 700931 / Ty2</strain>
    </source>
</reference>
<organism>
    <name type="scientific">Salmonella typhi</name>
    <dbReference type="NCBI Taxonomy" id="90370"/>
    <lineage>
        <taxon>Bacteria</taxon>
        <taxon>Pseudomonadati</taxon>
        <taxon>Pseudomonadota</taxon>
        <taxon>Gammaproteobacteria</taxon>
        <taxon>Enterobacterales</taxon>
        <taxon>Enterobacteriaceae</taxon>
        <taxon>Salmonella</taxon>
    </lineage>
</organism>
<evidence type="ECO:0000250" key="1">
    <source>
        <dbReference type="UniProtKB" id="Q5NUF3"/>
    </source>
</evidence>
<evidence type="ECO:0000255" key="2">
    <source>
        <dbReference type="HAMAP-Rule" id="MF_01958"/>
    </source>
</evidence>
<keyword id="KW-0963">Cytoplasm</keyword>
<keyword id="KW-0378">Hydrolase</keyword>
<keyword id="KW-0719">Serine esterase</keyword>
<proteinExistence type="inferred from homology"/>
<accession>Q8Z8T1</accession>
<accession>Q7C8B2</accession>
<dbReference type="EC" id="3.1.1.-" evidence="2"/>
<dbReference type="EMBL" id="AL513382">
    <property type="protein sequence ID" value="CAD04975.1"/>
    <property type="molecule type" value="Genomic_DNA"/>
</dbReference>
<dbReference type="EMBL" id="AE014613">
    <property type="protein sequence ID" value="AAO69961.1"/>
    <property type="molecule type" value="Genomic_DNA"/>
</dbReference>
<dbReference type="RefSeq" id="NP_455086.1">
    <property type="nucleotide sequence ID" value="NC_003198.1"/>
</dbReference>
<dbReference type="RefSeq" id="WP_000801788.1">
    <property type="nucleotide sequence ID" value="NZ_WSUR01000008.1"/>
</dbReference>
<dbReference type="SMR" id="Q8Z8T1"/>
<dbReference type="STRING" id="220341.gene:17584555"/>
<dbReference type="ESTHER" id="salty-AES">
    <property type="family name" value="Acetyl_esterase"/>
</dbReference>
<dbReference type="MEROPS" id="S09.A47"/>
<dbReference type="KEGG" id="stt:t2370"/>
<dbReference type="KEGG" id="sty:STY0534"/>
<dbReference type="PATRIC" id="fig|220341.7.peg.537"/>
<dbReference type="eggNOG" id="COG0657">
    <property type="taxonomic scope" value="Bacteria"/>
</dbReference>
<dbReference type="HOGENOM" id="CLU_012494_6_4_6"/>
<dbReference type="OMA" id="LWYPSTM"/>
<dbReference type="OrthoDB" id="9806180at2"/>
<dbReference type="Proteomes" id="UP000000541">
    <property type="component" value="Chromosome"/>
</dbReference>
<dbReference type="Proteomes" id="UP000002670">
    <property type="component" value="Chromosome"/>
</dbReference>
<dbReference type="GO" id="GO:0005737">
    <property type="term" value="C:cytoplasm"/>
    <property type="evidence" value="ECO:0007669"/>
    <property type="project" value="UniProtKB-SubCell"/>
</dbReference>
<dbReference type="GO" id="GO:0052689">
    <property type="term" value="F:carboxylic ester hydrolase activity"/>
    <property type="evidence" value="ECO:0007669"/>
    <property type="project" value="UniProtKB-UniRule"/>
</dbReference>
<dbReference type="FunFam" id="3.40.50.1820:FF:000035">
    <property type="entry name" value="Acetyl esterase"/>
    <property type="match status" value="1"/>
</dbReference>
<dbReference type="Gene3D" id="3.40.50.1820">
    <property type="entry name" value="alpha/beta hydrolase"/>
    <property type="match status" value="1"/>
</dbReference>
<dbReference type="HAMAP" id="MF_01958">
    <property type="entry name" value="Acetyl_esterase"/>
    <property type="match status" value="1"/>
</dbReference>
<dbReference type="InterPro" id="IPR013094">
    <property type="entry name" value="AB_hydrolase_3"/>
</dbReference>
<dbReference type="InterPro" id="IPR029058">
    <property type="entry name" value="AB_hydrolase_fold"/>
</dbReference>
<dbReference type="InterPro" id="IPR023508">
    <property type="entry name" value="Acetyl_esterase"/>
</dbReference>
<dbReference type="InterPro" id="IPR050300">
    <property type="entry name" value="GDXG_lipolytic_enzyme"/>
</dbReference>
<dbReference type="InterPro" id="IPR033140">
    <property type="entry name" value="Lipase_GDXG_put_SER_AS"/>
</dbReference>
<dbReference type="NCBIfam" id="NF007547">
    <property type="entry name" value="PRK10162.1"/>
    <property type="match status" value="1"/>
</dbReference>
<dbReference type="PANTHER" id="PTHR48081">
    <property type="entry name" value="AB HYDROLASE SUPERFAMILY PROTEIN C4A8.06C"/>
    <property type="match status" value="1"/>
</dbReference>
<dbReference type="PANTHER" id="PTHR48081:SF8">
    <property type="entry name" value="ALPHA_BETA HYDROLASE FOLD-3 DOMAIN-CONTAINING PROTEIN-RELATED"/>
    <property type="match status" value="1"/>
</dbReference>
<dbReference type="Pfam" id="PF07859">
    <property type="entry name" value="Abhydrolase_3"/>
    <property type="match status" value="1"/>
</dbReference>
<dbReference type="SUPFAM" id="SSF53474">
    <property type="entry name" value="alpha/beta-Hydrolases"/>
    <property type="match status" value="1"/>
</dbReference>
<dbReference type="PROSITE" id="PS01174">
    <property type="entry name" value="LIPASE_GDXG_SER"/>
    <property type="match status" value="1"/>
</dbReference>
<sequence>MKPENKIPVLTRLSDEMTAVVNFQQPGLPPWPADGDIETQRQYYLLERRFWNADAPSMTTRTCAVSTPYGDVTTRLYSPQPTSQATLYYLHGGGFILGNLDTHDRIMRLLARYTGCTVIGIDYSLSPQARYPQAIEETVAVCSYFSQHADEYSLNVEEIGFAGDSAGAMLALASALWLRDKHIRCGNVIAILLWYGLYGLQDSVSRRLFGGAWDGLTREDLDMYEKAYLRNDEDRESPWYCLFNNDLTRDVPPCFIASAEFDPLIDDSRLLHQTLQAHQQPCEYKMYPGTLHAFLHYSRMMTIADDALQDGARFFMARMKTPR</sequence>
<gene>
    <name evidence="2" type="primary">aes</name>
    <name type="ordered locus">STY0534</name>
    <name type="ordered locus">t2370</name>
</gene>
<feature type="chain" id="PRO_0000239710" description="Acetyl esterase">
    <location>
        <begin position="1"/>
        <end position="323"/>
    </location>
</feature>
<feature type="short sequence motif" description="Involved in the stabilization of the negatively charged intermediate by the formation of the oxyanion hole" evidence="1">
    <location>
        <begin position="91"/>
        <end position="93"/>
    </location>
</feature>
<feature type="active site" evidence="2">
    <location>
        <position position="165"/>
    </location>
</feature>
<feature type="active site" evidence="2">
    <location>
        <position position="262"/>
    </location>
</feature>
<feature type="active site" evidence="2">
    <location>
        <position position="292"/>
    </location>
</feature>
<comment type="function">
    <text evidence="2">Displays esterase activity towards short chain fatty esters (acyl chain length of up to 8 carbons). Able to hydrolyze triacetylglycerol (triacetin) and tributyrylglycerol (tributyrin), but not trioleylglycerol (triolein) or cholesterol oleate. Negatively regulates MalT activity by antagonizing maltotriose binding. Inhibits MelA galactosidase activity.</text>
</comment>
<comment type="subunit">
    <text evidence="2">Homodimer. Interacts with MalT and MelA.</text>
</comment>
<comment type="subcellular location">
    <subcellularLocation>
        <location evidence="2">Cytoplasm</location>
    </subcellularLocation>
</comment>
<comment type="similarity">
    <text evidence="2">Belongs to the 'GDXG' lipolytic enzyme family.</text>
</comment>
<name>AES_SALTI</name>